<dbReference type="EC" id="6.3.5.3" evidence="1"/>
<dbReference type="EC" id="3.5.1.2" evidence="1"/>
<dbReference type="EMBL" id="BA000022">
    <property type="protein sequence ID" value="BAA10599.1"/>
    <property type="molecule type" value="Genomic_DNA"/>
</dbReference>
<dbReference type="PIR" id="S76655">
    <property type="entry name" value="S76655"/>
</dbReference>
<dbReference type="SMR" id="Q55843"/>
<dbReference type="FunCoup" id="Q55843">
    <property type="interactions" value="160"/>
</dbReference>
<dbReference type="IntAct" id="Q55843">
    <property type="interactions" value="1"/>
</dbReference>
<dbReference type="STRING" id="1148.gene:10500103"/>
<dbReference type="PaxDb" id="1148-1001761"/>
<dbReference type="EnsemblBacteria" id="BAA10599">
    <property type="protein sequence ID" value="BAA10599"/>
    <property type="gene ID" value="BAA10599"/>
</dbReference>
<dbReference type="KEGG" id="syn:slr0520"/>
<dbReference type="eggNOG" id="COG0047">
    <property type="taxonomic scope" value="Bacteria"/>
</dbReference>
<dbReference type="InParanoid" id="Q55843"/>
<dbReference type="PhylomeDB" id="Q55843"/>
<dbReference type="UniPathway" id="UPA00074">
    <property type="reaction ID" value="UER00128"/>
</dbReference>
<dbReference type="Proteomes" id="UP000001425">
    <property type="component" value="Chromosome"/>
</dbReference>
<dbReference type="GO" id="GO:0005737">
    <property type="term" value="C:cytoplasm"/>
    <property type="evidence" value="ECO:0007669"/>
    <property type="project" value="UniProtKB-SubCell"/>
</dbReference>
<dbReference type="GO" id="GO:0005524">
    <property type="term" value="F:ATP binding"/>
    <property type="evidence" value="ECO:0007669"/>
    <property type="project" value="UniProtKB-KW"/>
</dbReference>
<dbReference type="GO" id="GO:0004359">
    <property type="term" value="F:glutaminase activity"/>
    <property type="evidence" value="ECO:0007669"/>
    <property type="project" value="UniProtKB-EC"/>
</dbReference>
<dbReference type="GO" id="GO:0004642">
    <property type="term" value="F:phosphoribosylformylglycinamidine synthase activity"/>
    <property type="evidence" value="ECO:0007669"/>
    <property type="project" value="UniProtKB-UniRule"/>
</dbReference>
<dbReference type="GO" id="GO:0006189">
    <property type="term" value="P:'de novo' IMP biosynthetic process"/>
    <property type="evidence" value="ECO:0007669"/>
    <property type="project" value="UniProtKB-UniRule"/>
</dbReference>
<dbReference type="CDD" id="cd01740">
    <property type="entry name" value="GATase1_FGAR_AT"/>
    <property type="match status" value="1"/>
</dbReference>
<dbReference type="Gene3D" id="3.40.50.880">
    <property type="match status" value="1"/>
</dbReference>
<dbReference type="HAMAP" id="MF_00421">
    <property type="entry name" value="PurQ"/>
    <property type="match status" value="1"/>
</dbReference>
<dbReference type="InterPro" id="IPR029062">
    <property type="entry name" value="Class_I_gatase-like"/>
</dbReference>
<dbReference type="InterPro" id="IPR010075">
    <property type="entry name" value="PRibForGlyAmidine_synth_PurQ"/>
</dbReference>
<dbReference type="NCBIfam" id="TIGR01737">
    <property type="entry name" value="FGAM_synth_I"/>
    <property type="match status" value="1"/>
</dbReference>
<dbReference type="NCBIfam" id="NF002957">
    <property type="entry name" value="PRK03619.1"/>
    <property type="match status" value="1"/>
</dbReference>
<dbReference type="PANTHER" id="PTHR47552">
    <property type="entry name" value="PHOSPHORIBOSYLFORMYLGLYCINAMIDINE SYNTHASE SUBUNIT PURQ"/>
    <property type="match status" value="1"/>
</dbReference>
<dbReference type="PANTHER" id="PTHR47552:SF1">
    <property type="entry name" value="PHOSPHORIBOSYLFORMYLGLYCINAMIDINE SYNTHASE SUBUNIT PURQ"/>
    <property type="match status" value="1"/>
</dbReference>
<dbReference type="Pfam" id="PF13507">
    <property type="entry name" value="GATase_5"/>
    <property type="match status" value="1"/>
</dbReference>
<dbReference type="PIRSF" id="PIRSF001586">
    <property type="entry name" value="FGAM_synth_I"/>
    <property type="match status" value="1"/>
</dbReference>
<dbReference type="SMART" id="SM01211">
    <property type="entry name" value="GATase_5"/>
    <property type="match status" value="1"/>
</dbReference>
<dbReference type="SUPFAM" id="SSF52317">
    <property type="entry name" value="Class I glutamine amidotransferase-like"/>
    <property type="match status" value="1"/>
</dbReference>
<dbReference type="PROSITE" id="PS51273">
    <property type="entry name" value="GATASE_TYPE_1"/>
    <property type="match status" value="1"/>
</dbReference>
<sequence>MTSFGIIVFPGSNCDRDIATVTAGLLDQPTRFIWHQETDLHGVDVVVLPGGFSYGDYLRCGAIARFSPIMTAIIDHANAGKRVLGICNGFQVLTEVGLLPGALIRNRDLHFICDRVTVRVESNQTVWTKGYQSQQVITLPIAHGEGRYFADGDTLKALEDNEQILFRYSNAQGELTTDSNPNGSLHNIAGITNVQGNVLGMMPHPERAADRLLKATDGLAMFIS</sequence>
<evidence type="ECO:0000255" key="1">
    <source>
        <dbReference type="HAMAP-Rule" id="MF_00421"/>
    </source>
</evidence>
<evidence type="ECO:0000269" key="2">
    <source>
    </source>
</evidence>
<gene>
    <name evidence="1" type="primary">purQ</name>
    <name type="ordered locus">slr0520</name>
</gene>
<protein>
    <recommendedName>
        <fullName evidence="1">Phosphoribosylformylglycinamidine synthase subunit PurQ</fullName>
        <shortName evidence="1">FGAM synthase</shortName>
        <ecNumber evidence="1">6.3.5.3</ecNumber>
    </recommendedName>
    <alternativeName>
        <fullName evidence="1">Formylglycinamide ribonucleotide amidotransferase subunit I</fullName>
        <shortName evidence="1">FGAR amidotransferase I</shortName>
        <shortName evidence="1">FGAR-AT I</shortName>
    </alternativeName>
    <alternativeName>
        <fullName evidence="1">Glutaminase PurQ</fullName>
        <ecNumber evidence="1">3.5.1.2</ecNumber>
    </alternativeName>
    <alternativeName>
        <fullName evidence="1">Phosphoribosylformylglycinamidine synthase subunit I</fullName>
    </alternativeName>
</protein>
<feature type="initiator methionine" description="Removed" evidence="2">
    <location>
        <position position="1"/>
    </location>
</feature>
<feature type="chain" id="PRO_0000100597" description="Phosphoribosylformylglycinamidine synthase subunit PurQ">
    <location>
        <begin position="2"/>
        <end position="224"/>
    </location>
</feature>
<feature type="domain" description="Glutamine amidotransferase type-1" evidence="1">
    <location>
        <begin position="4"/>
        <end position="224"/>
    </location>
</feature>
<feature type="active site" description="Nucleophile" evidence="1">
    <location>
        <position position="87"/>
    </location>
</feature>
<feature type="active site" evidence="1">
    <location>
        <position position="204"/>
    </location>
</feature>
<feature type="active site" evidence="1">
    <location>
        <position position="206"/>
    </location>
</feature>
<reference key="1">
    <citation type="journal article" date="1995" name="DNA Res.">
        <title>Sequence analysis of the genome of the unicellular cyanobacterium Synechocystis sp. strain PCC6803. I. Sequence features in the 1 Mb region from map positions 64% to 92% of the genome.</title>
        <authorList>
            <person name="Kaneko T."/>
            <person name="Tanaka A."/>
            <person name="Sato S."/>
            <person name="Kotani H."/>
            <person name="Sazuka T."/>
            <person name="Miyajima N."/>
            <person name="Sugiura M."/>
            <person name="Tabata S."/>
        </authorList>
    </citation>
    <scope>NUCLEOTIDE SEQUENCE [LARGE SCALE GENOMIC DNA]</scope>
    <source>
        <strain>ATCC 27184 / PCC 6803 / N-1</strain>
    </source>
</reference>
<reference key="2">
    <citation type="journal article" date="1996" name="DNA Res.">
        <title>Sequence analysis of the genome of the unicellular cyanobacterium Synechocystis sp. strain PCC6803. II. Sequence determination of the entire genome and assignment of potential protein-coding regions.</title>
        <authorList>
            <person name="Kaneko T."/>
            <person name="Sato S."/>
            <person name="Kotani H."/>
            <person name="Tanaka A."/>
            <person name="Asamizu E."/>
            <person name="Nakamura Y."/>
            <person name="Miyajima N."/>
            <person name="Hirosawa M."/>
            <person name="Sugiura M."/>
            <person name="Sasamoto S."/>
            <person name="Kimura T."/>
            <person name="Hosouchi T."/>
            <person name="Matsuno A."/>
            <person name="Muraki A."/>
            <person name="Nakazaki N."/>
            <person name="Naruo K."/>
            <person name="Okumura S."/>
            <person name="Shimpo S."/>
            <person name="Takeuchi C."/>
            <person name="Wada T."/>
            <person name="Watanabe A."/>
            <person name="Yamada M."/>
            <person name="Yasuda M."/>
            <person name="Tabata S."/>
        </authorList>
    </citation>
    <scope>NUCLEOTIDE SEQUENCE [LARGE SCALE GENOMIC DNA]</scope>
    <source>
        <strain>ATCC 27184 / PCC 6803 / Kazusa</strain>
    </source>
</reference>
<reference key="3">
    <citation type="journal article" date="1997" name="Electrophoresis">
        <title>Towards a proteome project of cyanobacterium Synechocystis sp. strain PCC6803: linking 130 protein spots with their respective genes.</title>
        <authorList>
            <person name="Sazuka T."/>
            <person name="Ohara O."/>
        </authorList>
    </citation>
    <scope>PROTEIN SEQUENCE OF 2-15</scope>
</reference>
<organism>
    <name type="scientific">Synechocystis sp. (strain ATCC 27184 / PCC 6803 / Kazusa)</name>
    <dbReference type="NCBI Taxonomy" id="1111708"/>
    <lineage>
        <taxon>Bacteria</taxon>
        <taxon>Bacillati</taxon>
        <taxon>Cyanobacteriota</taxon>
        <taxon>Cyanophyceae</taxon>
        <taxon>Synechococcales</taxon>
        <taxon>Merismopediaceae</taxon>
        <taxon>Synechocystis</taxon>
    </lineage>
</organism>
<name>PURQ_SYNY3</name>
<comment type="function">
    <text evidence="1">Part of the phosphoribosylformylglycinamidine synthase complex involved in the purines biosynthetic pathway. Catalyzes the ATP-dependent conversion of formylglycinamide ribonucleotide (FGAR) and glutamine to yield formylglycinamidine ribonucleotide (FGAM) and glutamate. The FGAM synthase complex is composed of three subunits. PurQ produces an ammonia molecule by converting glutamine to glutamate. PurL transfers the ammonia molecule to FGAR to form FGAM in an ATP-dependent manner. PurS interacts with PurQ and PurL and is thought to assist in the transfer of the ammonia molecule from PurQ to PurL.</text>
</comment>
<comment type="catalytic activity">
    <reaction evidence="1">
        <text>N(2)-formyl-N(1)-(5-phospho-beta-D-ribosyl)glycinamide + L-glutamine + ATP + H2O = 2-formamido-N(1)-(5-O-phospho-beta-D-ribosyl)acetamidine + L-glutamate + ADP + phosphate + H(+)</text>
        <dbReference type="Rhea" id="RHEA:17129"/>
        <dbReference type="ChEBI" id="CHEBI:15377"/>
        <dbReference type="ChEBI" id="CHEBI:15378"/>
        <dbReference type="ChEBI" id="CHEBI:29985"/>
        <dbReference type="ChEBI" id="CHEBI:30616"/>
        <dbReference type="ChEBI" id="CHEBI:43474"/>
        <dbReference type="ChEBI" id="CHEBI:58359"/>
        <dbReference type="ChEBI" id="CHEBI:147286"/>
        <dbReference type="ChEBI" id="CHEBI:147287"/>
        <dbReference type="ChEBI" id="CHEBI:456216"/>
        <dbReference type="EC" id="6.3.5.3"/>
    </reaction>
</comment>
<comment type="catalytic activity">
    <reaction evidence="1">
        <text>L-glutamine + H2O = L-glutamate + NH4(+)</text>
        <dbReference type="Rhea" id="RHEA:15889"/>
        <dbReference type="ChEBI" id="CHEBI:15377"/>
        <dbReference type="ChEBI" id="CHEBI:28938"/>
        <dbReference type="ChEBI" id="CHEBI:29985"/>
        <dbReference type="ChEBI" id="CHEBI:58359"/>
        <dbReference type="EC" id="3.5.1.2"/>
    </reaction>
</comment>
<comment type="pathway">
    <text evidence="1">Purine metabolism; IMP biosynthesis via de novo pathway; 5-amino-1-(5-phospho-D-ribosyl)imidazole from N(2)-formyl-N(1)-(5-phospho-D-ribosyl)glycinamide: step 1/2.</text>
</comment>
<comment type="subunit">
    <text evidence="1">Part of the FGAM synthase complex composed of 1 PurL, 1 PurQ and 2 PurS subunits.</text>
</comment>
<comment type="subcellular location">
    <subcellularLocation>
        <location evidence="1">Cytoplasm</location>
    </subcellularLocation>
</comment>
<keyword id="KW-0067">ATP-binding</keyword>
<keyword id="KW-0963">Cytoplasm</keyword>
<keyword id="KW-0903">Direct protein sequencing</keyword>
<keyword id="KW-0315">Glutamine amidotransferase</keyword>
<keyword id="KW-0378">Hydrolase</keyword>
<keyword id="KW-0436">Ligase</keyword>
<keyword id="KW-0547">Nucleotide-binding</keyword>
<keyword id="KW-0658">Purine biosynthesis</keyword>
<keyword id="KW-1185">Reference proteome</keyword>
<accession>Q55843</accession>
<proteinExistence type="evidence at protein level"/>